<comment type="function">
    <text evidence="1">One of the primary rRNA binding proteins, it binds directly to 16S rRNA where it nucleates assembly of the body of the 30S subunit.</text>
</comment>
<comment type="function">
    <text evidence="1">With S5 and S12 plays an important role in translational accuracy.</text>
</comment>
<comment type="subunit">
    <text evidence="1">Part of the 30S ribosomal subunit. Contacts protein S5. The interaction surface between S4 and S5 is involved in control of translational fidelity.</text>
</comment>
<comment type="similarity">
    <text evidence="1">Belongs to the universal ribosomal protein uS4 family.</text>
</comment>
<dbReference type="EMBL" id="CP001196">
    <property type="protein sequence ID" value="ACI92590.1"/>
    <property type="molecule type" value="Genomic_DNA"/>
</dbReference>
<dbReference type="EMBL" id="CP002826">
    <property type="protein sequence ID" value="AEI07224.1"/>
    <property type="molecule type" value="Genomic_DNA"/>
</dbReference>
<dbReference type="RefSeq" id="WP_012562619.1">
    <property type="nucleotide sequence ID" value="NC_015684.1"/>
</dbReference>
<dbReference type="SMR" id="B6JDU6"/>
<dbReference type="STRING" id="504832.OCA5_c25290"/>
<dbReference type="KEGG" id="oca:OCAR_5458"/>
<dbReference type="KEGG" id="ocg:OCA5_c25290"/>
<dbReference type="PATRIC" id="fig|504832.7.peg.2669"/>
<dbReference type="eggNOG" id="COG0522">
    <property type="taxonomic scope" value="Bacteria"/>
</dbReference>
<dbReference type="HOGENOM" id="CLU_092403_0_0_5"/>
<dbReference type="OrthoDB" id="9803672at2"/>
<dbReference type="Proteomes" id="UP000007730">
    <property type="component" value="Chromosome"/>
</dbReference>
<dbReference type="GO" id="GO:0015935">
    <property type="term" value="C:small ribosomal subunit"/>
    <property type="evidence" value="ECO:0007669"/>
    <property type="project" value="InterPro"/>
</dbReference>
<dbReference type="GO" id="GO:0019843">
    <property type="term" value="F:rRNA binding"/>
    <property type="evidence" value="ECO:0007669"/>
    <property type="project" value="UniProtKB-UniRule"/>
</dbReference>
<dbReference type="GO" id="GO:0003735">
    <property type="term" value="F:structural constituent of ribosome"/>
    <property type="evidence" value="ECO:0007669"/>
    <property type="project" value="InterPro"/>
</dbReference>
<dbReference type="GO" id="GO:0042274">
    <property type="term" value="P:ribosomal small subunit biogenesis"/>
    <property type="evidence" value="ECO:0007669"/>
    <property type="project" value="TreeGrafter"/>
</dbReference>
<dbReference type="GO" id="GO:0006412">
    <property type="term" value="P:translation"/>
    <property type="evidence" value="ECO:0007669"/>
    <property type="project" value="UniProtKB-UniRule"/>
</dbReference>
<dbReference type="CDD" id="cd00165">
    <property type="entry name" value="S4"/>
    <property type="match status" value="1"/>
</dbReference>
<dbReference type="FunFam" id="3.10.290.10:FF:000001">
    <property type="entry name" value="30S ribosomal protein S4"/>
    <property type="match status" value="1"/>
</dbReference>
<dbReference type="Gene3D" id="1.10.1050.10">
    <property type="entry name" value="Ribosomal Protein S4 Delta 41, Chain A, domain 1"/>
    <property type="match status" value="1"/>
</dbReference>
<dbReference type="Gene3D" id="3.10.290.10">
    <property type="entry name" value="RNA-binding S4 domain"/>
    <property type="match status" value="1"/>
</dbReference>
<dbReference type="HAMAP" id="MF_01306_B">
    <property type="entry name" value="Ribosomal_uS4_B"/>
    <property type="match status" value="1"/>
</dbReference>
<dbReference type="InterPro" id="IPR022801">
    <property type="entry name" value="Ribosomal_uS4"/>
</dbReference>
<dbReference type="InterPro" id="IPR005709">
    <property type="entry name" value="Ribosomal_uS4_bac-type"/>
</dbReference>
<dbReference type="InterPro" id="IPR018079">
    <property type="entry name" value="Ribosomal_uS4_CS"/>
</dbReference>
<dbReference type="InterPro" id="IPR001912">
    <property type="entry name" value="Ribosomal_uS4_N"/>
</dbReference>
<dbReference type="InterPro" id="IPR002942">
    <property type="entry name" value="S4_RNA-bd"/>
</dbReference>
<dbReference type="InterPro" id="IPR036986">
    <property type="entry name" value="S4_RNA-bd_sf"/>
</dbReference>
<dbReference type="NCBIfam" id="NF003717">
    <property type="entry name" value="PRK05327.1"/>
    <property type="match status" value="1"/>
</dbReference>
<dbReference type="NCBIfam" id="TIGR01017">
    <property type="entry name" value="rpsD_bact"/>
    <property type="match status" value="1"/>
</dbReference>
<dbReference type="PANTHER" id="PTHR11831">
    <property type="entry name" value="30S 40S RIBOSOMAL PROTEIN"/>
    <property type="match status" value="1"/>
</dbReference>
<dbReference type="PANTHER" id="PTHR11831:SF4">
    <property type="entry name" value="SMALL RIBOSOMAL SUBUNIT PROTEIN US4M"/>
    <property type="match status" value="1"/>
</dbReference>
<dbReference type="Pfam" id="PF00163">
    <property type="entry name" value="Ribosomal_S4"/>
    <property type="match status" value="1"/>
</dbReference>
<dbReference type="Pfam" id="PF01479">
    <property type="entry name" value="S4"/>
    <property type="match status" value="1"/>
</dbReference>
<dbReference type="SMART" id="SM01390">
    <property type="entry name" value="Ribosomal_S4"/>
    <property type="match status" value="1"/>
</dbReference>
<dbReference type="SMART" id="SM00363">
    <property type="entry name" value="S4"/>
    <property type="match status" value="1"/>
</dbReference>
<dbReference type="SUPFAM" id="SSF55174">
    <property type="entry name" value="Alpha-L RNA-binding motif"/>
    <property type="match status" value="1"/>
</dbReference>
<dbReference type="PROSITE" id="PS00632">
    <property type="entry name" value="RIBOSOMAL_S4"/>
    <property type="match status" value="1"/>
</dbReference>
<dbReference type="PROSITE" id="PS50889">
    <property type="entry name" value="S4"/>
    <property type="match status" value="1"/>
</dbReference>
<name>RS4_AFIC5</name>
<keyword id="KW-1185">Reference proteome</keyword>
<keyword id="KW-0687">Ribonucleoprotein</keyword>
<keyword id="KW-0689">Ribosomal protein</keyword>
<keyword id="KW-0694">RNA-binding</keyword>
<keyword id="KW-0699">rRNA-binding</keyword>
<gene>
    <name evidence="1" type="primary">rpsD</name>
    <name type="ordered locus">OCAR_5458</name>
    <name type="ordered locus">OCA5_c25290</name>
</gene>
<proteinExistence type="inferred from homology"/>
<organism>
    <name type="scientific">Afipia carboxidovorans (strain ATCC 49405 / DSM 1227 / KCTC 32145 / OM5)</name>
    <name type="common">Oligotropha carboxidovorans</name>
    <dbReference type="NCBI Taxonomy" id="504832"/>
    <lineage>
        <taxon>Bacteria</taxon>
        <taxon>Pseudomonadati</taxon>
        <taxon>Pseudomonadota</taxon>
        <taxon>Alphaproteobacteria</taxon>
        <taxon>Hyphomicrobiales</taxon>
        <taxon>Nitrobacteraceae</taxon>
        <taxon>Afipia</taxon>
    </lineage>
</organism>
<reference key="1">
    <citation type="journal article" date="2008" name="J. Bacteriol.">
        <title>Genome sequence of the chemolithoautotrophic bacterium Oligotropha carboxidovorans OM5T.</title>
        <authorList>
            <person name="Paul D."/>
            <person name="Bridges S."/>
            <person name="Burgess S.C."/>
            <person name="Dandass Y."/>
            <person name="Lawrence M.L."/>
        </authorList>
    </citation>
    <scope>NUCLEOTIDE SEQUENCE [LARGE SCALE GENOMIC DNA]</scope>
    <source>
        <strain>ATCC 49405 / DSM 1227 / KCTC 32145 / OM5</strain>
    </source>
</reference>
<reference key="2">
    <citation type="journal article" date="2011" name="J. Bacteriol.">
        <title>Complete genome sequences of the chemolithoautotrophic Oligotropha carboxidovorans strains OM4 and OM5.</title>
        <authorList>
            <person name="Volland S."/>
            <person name="Rachinger M."/>
            <person name="Strittmatter A."/>
            <person name="Daniel R."/>
            <person name="Gottschalk G."/>
            <person name="Meyer O."/>
        </authorList>
    </citation>
    <scope>NUCLEOTIDE SEQUENCE [LARGE SCALE GENOMIC DNA]</scope>
    <source>
        <strain>ATCC 49405 / DSM 1227 / KCTC 32145 / OM5</strain>
    </source>
</reference>
<sequence>MTKRNEAKYKIDRRMGQNIWGRPKSPVNKREYGPGQHGQRRKGKLSDFGTQLRAKQKLKGYYANISERQFYAVYVEATRLKGDSGENLIGLLERRLDAIVYRAKFVPTMFAARQFINHGHIKVNGKRVNIPSYKVKVGDVIEVKDASKQLALVLEANQLAERDVPDFLDVDHGKQTAKFTRIPSLSEVPFPVQMEPHLIIEFYSR</sequence>
<evidence type="ECO:0000255" key="1">
    <source>
        <dbReference type="HAMAP-Rule" id="MF_01306"/>
    </source>
</evidence>
<evidence type="ECO:0000256" key="2">
    <source>
        <dbReference type="SAM" id="MobiDB-lite"/>
    </source>
</evidence>
<evidence type="ECO:0000305" key="3"/>
<feature type="chain" id="PRO_1000140766" description="Small ribosomal subunit protein uS4">
    <location>
        <begin position="1"/>
        <end position="205"/>
    </location>
</feature>
<feature type="domain" description="S4 RNA-binding" evidence="1">
    <location>
        <begin position="94"/>
        <end position="157"/>
    </location>
</feature>
<feature type="region of interest" description="Disordered" evidence="2">
    <location>
        <begin position="18"/>
        <end position="49"/>
    </location>
</feature>
<protein>
    <recommendedName>
        <fullName evidence="1">Small ribosomal subunit protein uS4</fullName>
    </recommendedName>
    <alternativeName>
        <fullName evidence="3">30S ribosomal protein S4</fullName>
    </alternativeName>
</protein>
<accession>B6JDU6</accession>
<accession>F8BSI1</accession>